<feature type="chain" id="PRO_0000207262" description="Lipopolysaccharide heptosyltransferase 2">
    <location>
        <begin position="1"/>
        <end position="348"/>
    </location>
</feature>
<feature type="sequence conflict" description="In Ref. 4; M33577." evidence="7" ref="4">
    <location>
        <position position="16"/>
    </location>
</feature>
<feature type="sequence conflict" description="In Ref. 4; M33577." evidence="7" ref="4">
    <original>SL</original>
    <variation>DR</variation>
    <location>
        <begin position="19"/>
        <end position="20"/>
    </location>
</feature>
<feature type="sequence conflict" description="In Ref. 5." evidence="7" ref="5">
    <original>R</original>
    <variation>S</variation>
    <location>
        <position position="105"/>
    </location>
</feature>
<feature type="sequence conflict" description="In Ref. 5." evidence="7" ref="5">
    <original>L</original>
    <variation>R</variation>
    <location>
        <position position="151"/>
    </location>
</feature>
<feature type="sequence conflict" description="In Ref. 5." evidence="7" ref="5">
    <original>Q</original>
    <variation>H</variation>
    <location>
        <position position="159"/>
    </location>
</feature>
<feature type="sequence conflict" description="In Ref. 5." evidence="7" ref="5">
    <original>EL</original>
    <variation>DV</variation>
    <location>
        <begin position="204"/>
        <end position="205"/>
    </location>
</feature>
<feature type="strand" evidence="9">
    <location>
        <begin position="2"/>
        <end position="6"/>
    </location>
</feature>
<feature type="helix" evidence="9">
    <location>
        <begin position="11"/>
        <end position="27"/>
    </location>
</feature>
<feature type="strand" evidence="9">
    <location>
        <begin position="32"/>
        <end position="37"/>
    </location>
</feature>
<feature type="helix" evidence="9">
    <location>
        <begin position="39"/>
        <end position="41"/>
    </location>
</feature>
<feature type="helix" evidence="9">
    <location>
        <begin position="42"/>
        <end position="45"/>
    </location>
</feature>
<feature type="strand" evidence="9">
    <location>
        <begin position="51"/>
        <end position="56"/>
    </location>
</feature>
<feature type="helix" evidence="9">
    <location>
        <begin position="66"/>
        <end position="75"/>
    </location>
</feature>
<feature type="turn" evidence="9">
    <location>
        <begin position="76"/>
        <end position="80"/>
    </location>
</feature>
<feature type="strand" evidence="9">
    <location>
        <begin position="82"/>
        <end position="86"/>
    </location>
</feature>
<feature type="helix" evidence="9">
    <location>
        <begin position="92"/>
        <end position="94"/>
    </location>
</feature>
<feature type="helix" evidence="9">
    <location>
        <begin position="95"/>
        <end position="99"/>
    </location>
</feature>
<feature type="strand" evidence="9">
    <location>
        <begin position="103"/>
        <end position="108"/>
    </location>
</feature>
<feature type="turn" evidence="9">
    <location>
        <begin position="110"/>
        <end position="112"/>
    </location>
</feature>
<feature type="turn" evidence="9">
    <location>
        <begin position="114"/>
        <end position="116"/>
    </location>
</feature>
<feature type="strand" evidence="9">
    <location>
        <begin position="119"/>
        <end position="121"/>
    </location>
</feature>
<feature type="turn" evidence="9">
    <location>
        <begin position="125"/>
        <end position="127"/>
    </location>
</feature>
<feature type="helix" evidence="9">
    <location>
        <begin position="131"/>
        <end position="137"/>
    </location>
</feature>
<feature type="helix" evidence="9">
    <location>
        <begin position="142"/>
        <end position="144"/>
    </location>
</feature>
<feature type="helix" evidence="9">
    <location>
        <begin position="148"/>
        <end position="150"/>
    </location>
</feature>
<feature type="helix" evidence="9">
    <location>
        <begin position="164"/>
        <end position="173"/>
    </location>
</feature>
<feature type="strand" evidence="9">
    <location>
        <begin position="178"/>
        <end position="180"/>
    </location>
</feature>
<feature type="strand" evidence="9">
    <location>
        <begin position="182"/>
        <end position="186"/>
    </location>
</feature>
<feature type="helix" evidence="9">
    <location>
        <begin position="193"/>
        <end position="195"/>
    </location>
</feature>
<feature type="helix" evidence="9">
    <location>
        <begin position="199"/>
        <end position="211"/>
    </location>
</feature>
<feature type="strand" evidence="9">
    <location>
        <begin position="215"/>
        <end position="218"/>
    </location>
</feature>
<feature type="helix" evidence="9">
    <location>
        <begin position="222"/>
        <end position="224"/>
    </location>
</feature>
<feature type="helix" evidence="9">
    <location>
        <begin position="225"/>
        <end position="232"/>
    </location>
</feature>
<feature type="helix" evidence="9">
    <location>
        <begin position="237"/>
        <end position="240"/>
    </location>
</feature>
<feature type="strand" evidence="9">
    <location>
        <begin position="243"/>
        <end position="245"/>
    </location>
</feature>
<feature type="turn" evidence="9">
    <location>
        <begin position="247"/>
        <end position="249"/>
    </location>
</feature>
<feature type="helix" evidence="9">
    <location>
        <begin position="252"/>
        <end position="260"/>
    </location>
</feature>
<feature type="strand" evidence="9">
    <location>
        <begin position="262"/>
        <end position="270"/>
    </location>
</feature>
<feature type="helix" evidence="9">
    <location>
        <begin position="271"/>
        <end position="278"/>
    </location>
</feature>
<feature type="strand" evidence="9">
    <location>
        <begin position="283"/>
        <end position="290"/>
    </location>
</feature>
<feature type="strand" evidence="9">
    <location>
        <begin position="302"/>
        <end position="308"/>
    </location>
</feature>
<feature type="helix" evidence="9">
    <location>
        <begin position="325"/>
        <end position="328"/>
    </location>
</feature>
<feature type="helix" evidence="9">
    <location>
        <begin position="332"/>
        <end position="347"/>
    </location>
</feature>
<name>WAAF_ECOLI</name>
<protein>
    <recommendedName>
        <fullName evidence="7">Lipopolysaccharide heptosyltransferase 2</fullName>
        <ecNumber evidence="1 2">2.4.99.24</ecNumber>
    </recommendedName>
    <alternativeName>
        <fullName evidence="7">ADP-heptose:lipopolysaccharide heptosyltransferase II</fullName>
        <shortName evidence="7">ADP-heptose:LPS heptosyltransferase II</shortName>
        <shortName evidence="4">Heptosyltransferase II</shortName>
    </alternativeName>
</protein>
<reference key="1">
    <citation type="journal article" date="1994" name="Nucleic Acids Res.">
        <title>Analysis of the Escherichia coli genome. V. DNA sequence of the region from 76.0 to 81.5 minutes.</title>
        <authorList>
            <person name="Sofia H.J."/>
            <person name="Burland V."/>
            <person name="Daniels D.L."/>
            <person name="Plunkett G. III"/>
            <person name="Blattner F.R."/>
        </authorList>
    </citation>
    <scope>NUCLEOTIDE SEQUENCE [LARGE SCALE GENOMIC DNA]</scope>
    <source>
        <strain>K12 / MG1655 / ATCC 47076</strain>
    </source>
</reference>
<reference key="2">
    <citation type="journal article" date="1997" name="Science">
        <title>The complete genome sequence of Escherichia coli K-12.</title>
        <authorList>
            <person name="Blattner F.R."/>
            <person name="Plunkett G. III"/>
            <person name="Bloch C.A."/>
            <person name="Perna N.T."/>
            <person name="Burland V."/>
            <person name="Riley M."/>
            <person name="Collado-Vides J."/>
            <person name="Glasner J.D."/>
            <person name="Rode C.K."/>
            <person name="Mayhew G.F."/>
            <person name="Gregor J."/>
            <person name="Davis N.W."/>
            <person name="Kirkpatrick H.A."/>
            <person name="Goeden M.A."/>
            <person name="Rose D.J."/>
            <person name="Mau B."/>
            <person name="Shao Y."/>
        </authorList>
    </citation>
    <scope>NUCLEOTIDE SEQUENCE [LARGE SCALE GENOMIC DNA]</scope>
    <source>
        <strain>K12 / MG1655 / ATCC 47076</strain>
    </source>
</reference>
<reference key="3">
    <citation type="journal article" date="2006" name="Mol. Syst. Biol.">
        <title>Highly accurate genome sequences of Escherichia coli K-12 strains MG1655 and W3110.</title>
        <authorList>
            <person name="Hayashi K."/>
            <person name="Morooka N."/>
            <person name="Yamamoto Y."/>
            <person name="Fujita K."/>
            <person name="Isono K."/>
            <person name="Choi S."/>
            <person name="Ohtsubo E."/>
            <person name="Baba T."/>
            <person name="Wanner B.L."/>
            <person name="Mori H."/>
            <person name="Horiuchi T."/>
        </authorList>
    </citation>
    <scope>NUCLEOTIDE SEQUENCE [LARGE SCALE GENOMIC DNA]</scope>
    <source>
        <strain>K12 / W3110 / ATCC 27325 / DSM 5911</strain>
    </source>
</reference>
<reference key="4">
    <citation type="journal article" date="1990" name="J. Bacteriol.">
        <title>Cloning, expression, and characterization of the Escherichia coli K-12 rfaD gene.</title>
        <authorList>
            <person name="Pegues J.C."/>
            <person name="Chen L."/>
            <person name="Gordon A.W."/>
            <person name="Ding L."/>
            <person name="Coleman W.G. Jr."/>
        </authorList>
    </citation>
    <scope>NUCLEOTIDE SEQUENCE [GENOMIC DNA] OF 1-51</scope>
    <source>
        <strain>K12</strain>
    </source>
</reference>
<reference key="5">
    <citation type="journal article" date="1993" name="J. Bacteriol.">
        <title>Cloning and characterization of the Escherichia coli K-12 rfa-2 (rfaC) gene, a gene required for lipopolysaccharide inner core synthesis.</title>
        <authorList>
            <person name="Chen L."/>
            <person name="Coleman W.G. Jr."/>
        </authorList>
    </citation>
    <scope>NUCLEOTIDE SEQUENCE [GENOMIC DNA] OF 52-348</scope>
    <source>
        <strain>K12</strain>
    </source>
</reference>
<reference key="6">
    <citation type="journal article" date="1996" name="Trends Microbiol.">
        <title>Bacterial polysaccharide synthesis and gene nomenclature.</title>
        <authorList>
            <person name="Reeves P.R."/>
            <person name="Hobbs M."/>
            <person name="Valvano M.A."/>
            <person name="Skurnik M."/>
            <person name="Whitfield C."/>
            <person name="Coplin D."/>
            <person name="Kido N."/>
            <person name="Klena J."/>
            <person name="Maskell D."/>
            <person name="Raetz C.R.H."/>
            <person name="Rick P.D."/>
        </authorList>
    </citation>
    <scope>NOMENCLATURE</scope>
</reference>
<reference key="7">
    <citation type="journal article" date="2000" name="Eur. J. Biochem.">
        <title>Comparative functional characterization in vitro of heptosyltransferase I (WaaC) and II (WaaF) from Escherichia coli.</title>
        <authorList>
            <person name="Gronow S."/>
            <person name="Brabetz W."/>
            <person name="Brade H."/>
        </authorList>
    </citation>
    <scope>FUNCTION</scope>
    <scope>CATALYTIC ACTIVITY</scope>
    <scope>BIOPHYSICOCHEMICAL PROPERTIES</scope>
    <scope>PATHWAY</scope>
    <source>
        <strain>K12</strain>
    </source>
</reference>
<reference key="8">
    <citation type="journal article" date="2001" name="J. Endotoxin Res.">
        <title>Characterization of the physiological substrate for lipopolysaccharide heptosyltransferases I and II.</title>
        <authorList>
            <person name="Gronow S."/>
            <person name="Oertelt C."/>
            <person name="Ervelae E."/>
            <person name="Zamyatina A."/>
            <person name="Kosma P."/>
            <person name="Skurnik M."/>
            <person name="Holst O."/>
        </authorList>
    </citation>
    <scope>FUNCTION</scope>
    <scope>CATALYTIC ACTIVITY</scope>
</reference>
<reference key="9">
    <citation type="journal article" date="2016" name="J. Basic Microbiol.">
        <title>Deletion of the genes waaC, waaF, or waaG in Escherichia coli W3110 disables the flagella biosynthesis.</title>
        <authorList>
            <person name="Wang Z."/>
            <person name="Wang J."/>
            <person name="Ren G."/>
            <person name="Li Y."/>
            <person name="Wang X."/>
        </authorList>
    </citation>
    <scope>DISRUPTION PHENOTYPE</scope>
    <source>
        <strain>K12 / W3110 / ATCC 27325 / DSM 5911</strain>
    </source>
</reference>
<reference evidence="8" key="10">
    <citation type="submission" date="2003-06" db="PDB data bank">
        <title>Structure of E. coli ADP-heptose LPS heptosyltransferase II.</title>
        <authorList>
            <person name="Kniewel R."/>
            <person name="Buglino J."/>
            <person name="Solorzano V."/>
            <person name="Wu J."/>
            <person name="Lima C.D."/>
        </authorList>
    </citation>
    <scope>X-RAY CRYSTALLOGRAPHY (2.00 ANGSTROMS)</scope>
</reference>
<keyword id="KW-0002">3D-structure</keyword>
<keyword id="KW-0328">Glycosyltransferase</keyword>
<keyword id="KW-0448">Lipopolysaccharide biosynthesis</keyword>
<keyword id="KW-1185">Reference proteome</keyword>
<keyword id="KW-0808">Transferase</keyword>
<comment type="function">
    <text evidence="1 2">Glycosyltransferase involved in the biosynthesis of the core oligosaccharide region of lipopolysaccharide (LPS) (PubMed:11054112). Catalyzes the addition of the second heptose unit to the heptosyl-Kdo2-lipid A module (PubMed:11054112, PubMed:11717579). The analog ADP-mannose can serve as an alternative donor in place of ADP-L-glycero-D-manno-heptose, but with lower efficiency (PubMed:11054112).</text>
</comment>
<comment type="catalytic activity">
    <reaction evidence="1 2">
        <text>an L-alpha-D-Hep-(1-&gt;5)-[alpha-Kdo-(2-&gt;4)]-alpha-Kdo-(2-&gt;6)-lipid A + ADP-L-glycero-beta-D-manno-heptose = an L-alpha-D-Hep-(1-&gt;3)-L-alpha-D-Hep-(1-&gt;5)-[alpha-Kdo-(2-&gt;4)]-alpha-Kdo-(2-&gt;6)-lipid A + ADP + H(+)</text>
        <dbReference type="Rhea" id="RHEA:74071"/>
        <dbReference type="ChEBI" id="CHEBI:15378"/>
        <dbReference type="ChEBI" id="CHEBI:61506"/>
        <dbReference type="ChEBI" id="CHEBI:193068"/>
        <dbReference type="ChEBI" id="CHEBI:193069"/>
        <dbReference type="ChEBI" id="CHEBI:456216"/>
        <dbReference type="EC" id="2.4.99.24"/>
    </reaction>
</comment>
<comment type="catalytic activity">
    <reaction evidence="1 2">
        <text>L-alpha-D-Hep-(1-&gt;5)-[alpha-Kdo-(2-&gt;4)]-alpha-Kdo-(2-&gt;6)-lipid A (E. coli) + ADP-L-glycero-beta-D-manno-heptose = L-alpha-D-Hep-(1-&gt;3)-L-alpha-D-Hep-(1-&gt;5)-[alpha-Kdo-(2-&gt;4)]-alpha-Kdo-(2-&gt;6)-lipid A (E. coli) + ADP + H(+)</text>
        <dbReference type="Rhea" id="RHEA:28538"/>
        <dbReference type="ChEBI" id="CHEBI:15378"/>
        <dbReference type="ChEBI" id="CHEBI:61502"/>
        <dbReference type="ChEBI" id="CHEBI:61506"/>
        <dbReference type="ChEBI" id="CHEBI:61507"/>
        <dbReference type="ChEBI" id="CHEBI:456216"/>
        <dbReference type="EC" id="2.4.99.24"/>
    </reaction>
</comment>
<comment type="biophysicochemical properties">
    <phDependence>
        <text evidence="1">Active in a broad range from pH 5.5 to pH 10.5.</text>
    </phDependence>
</comment>
<comment type="pathway">
    <text evidence="1">Bacterial outer membrane biogenesis; LPS core biosynthesis.</text>
</comment>
<comment type="disruption phenotype">
    <text evidence="3">Deletion mutant synthesizes shorter LPS without the outer-core oligosaccharide and cannot produce flagella, demonstrating that flagella assembly in E.coli depends on the length of LPS.</text>
</comment>
<comment type="similarity">
    <text evidence="7">Belongs to the glycosyltransferase 9 family.</text>
</comment>
<organism>
    <name type="scientific">Escherichia coli (strain K12)</name>
    <dbReference type="NCBI Taxonomy" id="83333"/>
    <lineage>
        <taxon>Bacteria</taxon>
        <taxon>Pseudomonadati</taxon>
        <taxon>Pseudomonadota</taxon>
        <taxon>Gammaproteobacteria</taxon>
        <taxon>Enterobacterales</taxon>
        <taxon>Enterobacteriaceae</taxon>
        <taxon>Escherichia</taxon>
    </lineage>
</organism>
<proteinExistence type="evidence at protein level"/>
<dbReference type="EC" id="2.4.99.24" evidence="1 2"/>
<dbReference type="EMBL" id="U00039">
    <property type="protein sequence ID" value="AAB18597.1"/>
    <property type="molecule type" value="Genomic_DNA"/>
</dbReference>
<dbReference type="EMBL" id="U00096">
    <property type="protein sequence ID" value="AAC76644.1"/>
    <property type="molecule type" value="Genomic_DNA"/>
</dbReference>
<dbReference type="EMBL" id="AP009048">
    <property type="protein sequence ID" value="BAE77672.1"/>
    <property type="molecule type" value="Genomic_DNA"/>
</dbReference>
<dbReference type="EMBL" id="M33577">
    <property type="status" value="NOT_ANNOTATED_CDS"/>
    <property type="molecule type" value="Genomic_DNA"/>
</dbReference>
<dbReference type="EMBL" id="X62530">
    <property type="status" value="NOT_ANNOTATED_CDS"/>
    <property type="molecule type" value="Genomic_DNA"/>
</dbReference>
<dbReference type="PIR" id="S47841">
    <property type="entry name" value="S47841"/>
</dbReference>
<dbReference type="RefSeq" id="NP_418077.1">
    <property type="nucleotide sequence ID" value="NC_000913.3"/>
</dbReference>
<dbReference type="RefSeq" id="WP_000699219.1">
    <property type="nucleotide sequence ID" value="NZ_LN832404.1"/>
</dbReference>
<dbReference type="PDB" id="1PSW">
    <property type="method" value="X-ray"/>
    <property type="resolution" value="2.00 A"/>
    <property type="chains" value="A=1-348"/>
</dbReference>
<dbReference type="PDBsum" id="1PSW"/>
<dbReference type="SMR" id="P37692"/>
<dbReference type="BioGRID" id="4263306">
    <property type="interactions" value="357"/>
</dbReference>
<dbReference type="DIP" id="DIP-10667N"/>
<dbReference type="FunCoup" id="P37692">
    <property type="interactions" value="273"/>
</dbReference>
<dbReference type="IntAct" id="P37692">
    <property type="interactions" value="11"/>
</dbReference>
<dbReference type="STRING" id="511145.b3620"/>
<dbReference type="CAZy" id="GT9">
    <property type="family name" value="Glycosyltransferase Family 9"/>
</dbReference>
<dbReference type="jPOST" id="P37692"/>
<dbReference type="PaxDb" id="511145-b3620"/>
<dbReference type="DNASU" id="948135"/>
<dbReference type="EnsemblBacteria" id="AAC76644">
    <property type="protein sequence ID" value="AAC76644"/>
    <property type="gene ID" value="b3620"/>
</dbReference>
<dbReference type="GeneID" id="75173816"/>
<dbReference type="GeneID" id="948135"/>
<dbReference type="KEGG" id="ecj:JW3595"/>
<dbReference type="KEGG" id="eco:b3620"/>
<dbReference type="KEGG" id="ecoc:C3026_19625"/>
<dbReference type="PATRIC" id="fig|1411691.4.peg.3086"/>
<dbReference type="EchoBASE" id="EB2124"/>
<dbReference type="eggNOG" id="COG0859">
    <property type="taxonomic scope" value="Bacteria"/>
</dbReference>
<dbReference type="HOGENOM" id="CLU_038371_7_0_6"/>
<dbReference type="InParanoid" id="P37692"/>
<dbReference type="OMA" id="KRVCPLK"/>
<dbReference type="OrthoDB" id="9797795at2"/>
<dbReference type="PhylomeDB" id="P37692"/>
<dbReference type="BioCyc" id="EcoCyc:EG12210-MONOMER"/>
<dbReference type="BioCyc" id="MetaCyc:EG12210-MONOMER"/>
<dbReference type="BRENDA" id="2.4.99.B7">
    <property type="organism ID" value="2026"/>
</dbReference>
<dbReference type="UniPathway" id="UPA00958"/>
<dbReference type="EvolutionaryTrace" id="P37692"/>
<dbReference type="PRO" id="PR:P37692"/>
<dbReference type="Proteomes" id="UP000000625">
    <property type="component" value="Chromosome"/>
</dbReference>
<dbReference type="GO" id="GO:0005829">
    <property type="term" value="C:cytosol"/>
    <property type="evidence" value="ECO:0000314"/>
    <property type="project" value="EcoCyc"/>
</dbReference>
<dbReference type="GO" id="GO:0008713">
    <property type="term" value="F:ADP-heptose-lipopolysaccharide heptosyltransferase activity"/>
    <property type="evidence" value="ECO:0000314"/>
    <property type="project" value="CACAO"/>
</dbReference>
<dbReference type="GO" id="GO:0009244">
    <property type="term" value="P:lipopolysaccharide core region biosynthetic process"/>
    <property type="evidence" value="ECO:0000315"/>
    <property type="project" value="EcoCyc"/>
</dbReference>
<dbReference type="CDD" id="cd03789">
    <property type="entry name" value="GT9_LPS_heptosyltransferase"/>
    <property type="match status" value="1"/>
</dbReference>
<dbReference type="FunFam" id="3.40.50.2000:FF:000022">
    <property type="entry name" value="ADP-heptose--LPS heptosyltransferase II"/>
    <property type="match status" value="1"/>
</dbReference>
<dbReference type="FunFam" id="3.40.50.2000:FF:000023">
    <property type="entry name" value="ADP-heptose--LPS heptosyltransferase II"/>
    <property type="match status" value="1"/>
</dbReference>
<dbReference type="Gene3D" id="3.40.50.2000">
    <property type="entry name" value="Glycogen Phosphorylase B"/>
    <property type="match status" value="2"/>
</dbReference>
<dbReference type="InterPro" id="IPR002201">
    <property type="entry name" value="Glyco_trans_9"/>
</dbReference>
<dbReference type="InterPro" id="IPR051199">
    <property type="entry name" value="LPS_LOS_Heptosyltrfase"/>
</dbReference>
<dbReference type="InterPro" id="IPR011910">
    <property type="entry name" value="RfaF"/>
</dbReference>
<dbReference type="NCBIfam" id="TIGR02195">
    <property type="entry name" value="heptsyl_trn_II"/>
    <property type="match status" value="1"/>
</dbReference>
<dbReference type="NCBIfam" id="NF008162">
    <property type="entry name" value="PRK10916.1"/>
    <property type="match status" value="1"/>
</dbReference>
<dbReference type="PANTHER" id="PTHR30160:SF7">
    <property type="entry name" value="ADP-HEPTOSE--LPS HEPTOSYLTRANSFERASE 2"/>
    <property type="match status" value="1"/>
</dbReference>
<dbReference type="PANTHER" id="PTHR30160">
    <property type="entry name" value="TETRAACYLDISACCHARIDE 4'-KINASE-RELATED"/>
    <property type="match status" value="1"/>
</dbReference>
<dbReference type="Pfam" id="PF01075">
    <property type="entry name" value="Glyco_transf_9"/>
    <property type="match status" value="1"/>
</dbReference>
<dbReference type="SUPFAM" id="SSF53756">
    <property type="entry name" value="UDP-Glycosyltransferase/glycogen phosphorylase"/>
    <property type="match status" value="1"/>
</dbReference>
<gene>
    <name evidence="6" type="primary">waaF</name>
    <name evidence="5" type="synonym">rfaF</name>
    <name type="ordered locus">b3620</name>
    <name type="ordered locus">JW3595</name>
</gene>
<sequence>MKILVIGPSWVGDMMMSQSLYRTLQARYPQAIIDVMAPAWCRPLLSRMPEVNEAIPMPLGHGALEIGERRKLGHSLREKRYDRAYVLPNSFKSALVPFFAGIPHRTGWRGEMRYGLLNDVRVLDKEAWPLMVERYIALAYDKGIMRTAQDLPQPLLWPQLQVSEGEKSYTCNQFSLSSERPMIGFCPGAEFGPAKRWPHYHYAELAKQLIDEGYQVVLFGSAKDHEAGNEILAALNTEQQAWCRNLAGETQLDQAVILIAACKAIVTNDSGLMHVAAALNRPLVALYGPSSPDFTPPLSHKARVIRLITGYHKVRKGDAAEGYHQSLIDITPQRVLEELNALLLQEEA</sequence>
<accession>P37692</accession>
<accession>Q2M7T4</accession>
<evidence type="ECO:0000269" key="1">
    <source>
    </source>
</evidence>
<evidence type="ECO:0000269" key="2">
    <source>
    </source>
</evidence>
<evidence type="ECO:0000269" key="3">
    <source>
    </source>
</evidence>
<evidence type="ECO:0000303" key="4">
    <source>
    </source>
</evidence>
<evidence type="ECO:0000303" key="5">
    <source>
    </source>
</evidence>
<evidence type="ECO:0000303" key="6">
    <source>
    </source>
</evidence>
<evidence type="ECO:0000305" key="7"/>
<evidence type="ECO:0007744" key="8">
    <source>
        <dbReference type="PDB" id="1PSW"/>
    </source>
</evidence>
<evidence type="ECO:0007829" key="9">
    <source>
        <dbReference type="PDB" id="1PSW"/>
    </source>
</evidence>